<feature type="chain" id="PRO_1000014024" description="Glucose-6-phosphate isomerase">
    <location>
        <begin position="1"/>
        <end position="500"/>
    </location>
</feature>
<feature type="active site" description="Proton donor" evidence="1">
    <location>
        <position position="332"/>
    </location>
</feature>
<feature type="active site" evidence="1">
    <location>
        <position position="363"/>
    </location>
</feature>
<feature type="active site" evidence="1">
    <location>
        <position position="473"/>
    </location>
</feature>
<comment type="function">
    <text evidence="1">Catalyzes the reversible isomerization of glucose-6-phosphate to fructose-6-phosphate.</text>
</comment>
<comment type="catalytic activity">
    <reaction evidence="1">
        <text>alpha-D-glucose 6-phosphate = beta-D-fructose 6-phosphate</text>
        <dbReference type="Rhea" id="RHEA:11816"/>
        <dbReference type="ChEBI" id="CHEBI:57634"/>
        <dbReference type="ChEBI" id="CHEBI:58225"/>
        <dbReference type="EC" id="5.3.1.9"/>
    </reaction>
</comment>
<comment type="pathway">
    <text evidence="1">Carbohydrate biosynthesis; gluconeogenesis.</text>
</comment>
<comment type="pathway">
    <text evidence="1">Carbohydrate degradation; glycolysis; D-glyceraldehyde 3-phosphate and glycerone phosphate from D-glucose: step 2/4.</text>
</comment>
<comment type="subcellular location">
    <subcellularLocation>
        <location evidence="1">Cytoplasm</location>
    </subcellularLocation>
</comment>
<comment type="similarity">
    <text evidence="1">Belongs to the GPI family.</text>
</comment>
<protein>
    <recommendedName>
        <fullName evidence="1">Glucose-6-phosphate isomerase</fullName>
        <shortName evidence="1">GPI</shortName>
        <ecNumber evidence="1">5.3.1.9</ecNumber>
    </recommendedName>
    <alternativeName>
        <fullName evidence="1">Phosphoglucose isomerase</fullName>
        <shortName evidence="1">PGI</shortName>
    </alternativeName>
    <alternativeName>
        <fullName evidence="1">Phosphohexose isomerase</fullName>
        <shortName evidence="1">PHI</shortName>
    </alternativeName>
</protein>
<accession>A5V9W3</accession>
<organism>
    <name type="scientific">Rhizorhabdus wittichii (strain DSM 6014 / CCUG 31198 / JCM 15750 / NBRC 105917 / EY 4224 / RW1)</name>
    <name type="common">Sphingomonas wittichii</name>
    <dbReference type="NCBI Taxonomy" id="392499"/>
    <lineage>
        <taxon>Bacteria</taxon>
        <taxon>Pseudomonadati</taxon>
        <taxon>Pseudomonadota</taxon>
        <taxon>Alphaproteobacteria</taxon>
        <taxon>Sphingomonadales</taxon>
        <taxon>Sphingomonadaceae</taxon>
        <taxon>Rhizorhabdus</taxon>
    </lineage>
</organism>
<dbReference type="EC" id="5.3.1.9" evidence="1"/>
<dbReference type="EMBL" id="CP000699">
    <property type="protein sequence ID" value="ABQ69079.1"/>
    <property type="molecule type" value="Genomic_DNA"/>
</dbReference>
<dbReference type="SMR" id="A5V9W3"/>
<dbReference type="STRING" id="392499.Swit_2723"/>
<dbReference type="PaxDb" id="392499-Swit_2723"/>
<dbReference type="KEGG" id="swi:Swit_2723"/>
<dbReference type="eggNOG" id="COG0166">
    <property type="taxonomic scope" value="Bacteria"/>
</dbReference>
<dbReference type="HOGENOM" id="CLU_017947_3_1_5"/>
<dbReference type="OrthoDB" id="140919at2"/>
<dbReference type="UniPathway" id="UPA00109">
    <property type="reaction ID" value="UER00181"/>
</dbReference>
<dbReference type="UniPathway" id="UPA00138"/>
<dbReference type="Proteomes" id="UP000001989">
    <property type="component" value="Chromosome"/>
</dbReference>
<dbReference type="GO" id="GO:0005829">
    <property type="term" value="C:cytosol"/>
    <property type="evidence" value="ECO:0007669"/>
    <property type="project" value="TreeGrafter"/>
</dbReference>
<dbReference type="GO" id="GO:0097367">
    <property type="term" value="F:carbohydrate derivative binding"/>
    <property type="evidence" value="ECO:0007669"/>
    <property type="project" value="InterPro"/>
</dbReference>
<dbReference type="GO" id="GO:0004347">
    <property type="term" value="F:glucose-6-phosphate isomerase activity"/>
    <property type="evidence" value="ECO:0007669"/>
    <property type="project" value="UniProtKB-UniRule"/>
</dbReference>
<dbReference type="GO" id="GO:0048029">
    <property type="term" value="F:monosaccharide binding"/>
    <property type="evidence" value="ECO:0007669"/>
    <property type="project" value="TreeGrafter"/>
</dbReference>
<dbReference type="GO" id="GO:0006094">
    <property type="term" value="P:gluconeogenesis"/>
    <property type="evidence" value="ECO:0007669"/>
    <property type="project" value="UniProtKB-UniRule"/>
</dbReference>
<dbReference type="GO" id="GO:0051156">
    <property type="term" value="P:glucose 6-phosphate metabolic process"/>
    <property type="evidence" value="ECO:0007669"/>
    <property type="project" value="TreeGrafter"/>
</dbReference>
<dbReference type="GO" id="GO:0006096">
    <property type="term" value="P:glycolytic process"/>
    <property type="evidence" value="ECO:0007669"/>
    <property type="project" value="UniProtKB-UniRule"/>
</dbReference>
<dbReference type="CDD" id="cd05015">
    <property type="entry name" value="SIS_PGI_1"/>
    <property type="match status" value="1"/>
</dbReference>
<dbReference type="CDD" id="cd05016">
    <property type="entry name" value="SIS_PGI_2"/>
    <property type="match status" value="1"/>
</dbReference>
<dbReference type="Gene3D" id="1.10.1390.10">
    <property type="match status" value="1"/>
</dbReference>
<dbReference type="Gene3D" id="3.40.50.10490">
    <property type="entry name" value="Glucose-6-phosphate isomerase like protein, domain 1"/>
    <property type="match status" value="2"/>
</dbReference>
<dbReference type="HAMAP" id="MF_00473">
    <property type="entry name" value="G6P_isomerase"/>
    <property type="match status" value="1"/>
</dbReference>
<dbReference type="InterPro" id="IPR001672">
    <property type="entry name" value="G6P_Isomerase"/>
</dbReference>
<dbReference type="InterPro" id="IPR023096">
    <property type="entry name" value="G6P_Isomerase_C"/>
</dbReference>
<dbReference type="InterPro" id="IPR018189">
    <property type="entry name" value="Phosphoglucose_isomerase_CS"/>
</dbReference>
<dbReference type="InterPro" id="IPR046348">
    <property type="entry name" value="SIS_dom_sf"/>
</dbReference>
<dbReference type="InterPro" id="IPR035476">
    <property type="entry name" value="SIS_PGI_1"/>
</dbReference>
<dbReference type="InterPro" id="IPR035482">
    <property type="entry name" value="SIS_PGI_2"/>
</dbReference>
<dbReference type="NCBIfam" id="NF001211">
    <property type="entry name" value="PRK00179.1"/>
    <property type="match status" value="1"/>
</dbReference>
<dbReference type="PANTHER" id="PTHR11469">
    <property type="entry name" value="GLUCOSE-6-PHOSPHATE ISOMERASE"/>
    <property type="match status" value="1"/>
</dbReference>
<dbReference type="PANTHER" id="PTHR11469:SF1">
    <property type="entry name" value="GLUCOSE-6-PHOSPHATE ISOMERASE"/>
    <property type="match status" value="1"/>
</dbReference>
<dbReference type="Pfam" id="PF00342">
    <property type="entry name" value="PGI"/>
    <property type="match status" value="1"/>
</dbReference>
<dbReference type="PRINTS" id="PR00662">
    <property type="entry name" value="G6PISOMERASE"/>
</dbReference>
<dbReference type="SUPFAM" id="SSF53697">
    <property type="entry name" value="SIS domain"/>
    <property type="match status" value="1"/>
</dbReference>
<dbReference type="PROSITE" id="PS00765">
    <property type="entry name" value="P_GLUCOSE_ISOMERASE_1"/>
    <property type="match status" value="1"/>
</dbReference>
<dbReference type="PROSITE" id="PS00174">
    <property type="entry name" value="P_GLUCOSE_ISOMERASE_2"/>
    <property type="match status" value="1"/>
</dbReference>
<dbReference type="PROSITE" id="PS51463">
    <property type="entry name" value="P_GLUCOSE_ISOMERASE_3"/>
    <property type="match status" value="1"/>
</dbReference>
<sequence length="500" mass="53935">MTEAKAAWNALRDTPATSLTELFTNEPDRLSRLSMEEAGILFDFSKTHLSAALIDRFAALAEASGFAARRDALFAGAAVNVTEDRAAEHPAERGQGAPDSVARARGFHARMRGMIDAIEAEVFGPIRHILHVGIGGSALGPDLLVDALGRDAGRYEVAVVSNVDGAALDAVFRRFDPQATLLVVASKTFTTTETMLNARSVLAWMEEDNVEDPYSRVIALTAAPEKAVEWGIDETRILPFSESVGGRYSLWSSIGFPVALALGWDAFEELLEGAAAMDRHFRLAPPSANIPLLAAFVDQYYSVLRGAETRAVFAYDERLRLLPSYLQQLEMESNGKGVKADGSPVDGPTAAITWGGVGTDAQHAVFQLLHQGTRLVPVEFVAAIEPDHVLDDAHHRTLLVNCFAQGAALMAGRDNGDPARAYPGDRPSTTILLDRLDPGRLGALIAFYEHRTFANAVLLGINPFDQFGVELGKEIARSIESEGTDRFDPSTRALIARALG</sequence>
<keyword id="KW-0963">Cytoplasm</keyword>
<keyword id="KW-0312">Gluconeogenesis</keyword>
<keyword id="KW-0324">Glycolysis</keyword>
<keyword id="KW-0413">Isomerase</keyword>
<keyword id="KW-1185">Reference proteome</keyword>
<evidence type="ECO:0000255" key="1">
    <source>
        <dbReference type="HAMAP-Rule" id="MF_00473"/>
    </source>
</evidence>
<gene>
    <name evidence="1" type="primary">pgi</name>
    <name type="ordered locus">Swit_2723</name>
</gene>
<reference key="1">
    <citation type="journal article" date="2010" name="J. Bacteriol.">
        <title>Genome sequence of the dioxin-mineralizing bacterium Sphingomonas wittichii RW1.</title>
        <authorList>
            <person name="Miller T.R."/>
            <person name="Delcher A.L."/>
            <person name="Salzberg S.L."/>
            <person name="Saunders E."/>
            <person name="Detter J.C."/>
            <person name="Halden R.U."/>
        </authorList>
    </citation>
    <scope>NUCLEOTIDE SEQUENCE [LARGE SCALE GENOMIC DNA]</scope>
    <source>
        <strain>DSM 6014 / CCUG 31198 / JCM 15750 / NBRC 105917 / EY 4224 / RW1</strain>
    </source>
</reference>
<name>G6PI_RHIWR</name>
<proteinExistence type="inferred from homology"/>